<organism>
    <name type="scientific">Listeria innocua serovar 6a (strain ATCC BAA-680 / CLIP 11262)</name>
    <dbReference type="NCBI Taxonomy" id="272626"/>
    <lineage>
        <taxon>Bacteria</taxon>
        <taxon>Bacillati</taxon>
        <taxon>Bacillota</taxon>
        <taxon>Bacilli</taxon>
        <taxon>Bacillales</taxon>
        <taxon>Listeriaceae</taxon>
        <taxon>Listeria</taxon>
    </lineage>
</organism>
<protein>
    <recommendedName>
        <fullName evidence="1">Large ribosomal subunit protein uL2</fullName>
    </recommendedName>
    <alternativeName>
        <fullName evidence="3">50S ribosomal protein L2</fullName>
    </alternativeName>
</protein>
<proteinExistence type="inferred from homology"/>
<gene>
    <name evidence="1" type="primary">rplB</name>
    <name type="ordered locus">lin2778</name>
</gene>
<reference key="1">
    <citation type="journal article" date="2001" name="Science">
        <title>Comparative genomics of Listeria species.</title>
        <authorList>
            <person name="Glaser P."/>
            <person name="Frangeul L."/>
            <person name="Buchrieser C."/>
            <person name="Rusniok C."/>
            <person name="Amend A."/>
            <person name="Baquero F."/>
            <person name="Berche P."/>
            <person name="Bloecker H."/>
            <person name="Brandt P."/>
            <person name="Chakraborty T."/>
            <person name="Charbit A."/>
            <person name="Chetouani F."/>
            <person name="Couve E."/>
            <person name="de Daruvar A."/>
            <person name="Dehoux P."/>
            <person name="Domann E."/>
            <person name="Dominguez-Bernal G."/>
            <person name="Duchaud E."/>
            <person name="Durant L."/>
            <person name="Dussurget O."/>
            <person name="Entian K.-D."/>
            <person name="Fsihi H."/>
            <person name="Garcia-del Portillo F."/>
            <person name="Garrido P."/>
            <person name="Gautier L."/>
            <person name="Goebel W."/>
            <person name="Gomez-Lopez N."/>
            <person name="Hain T."/>
            <person name="Hauf J."/>
            <person name="Jackson D."/>
            <person name="Jones L.-M."/>
            <person name="Kaerst U."/>
            <person name="Kreft J."/>
            <person name="Kuhn M."/>
            <person name="Kunst F."/>
            <person name="Kurapkat G."/>
            <person name="Madueno E."/>
            <person name="Maitournam A."/>
            <person name="Mata Vicente J."/>
            <person name="Ng E."/>
            <person name="Nedjari H."/>
            <person name="Nordsiek G."/>
            <person name="Novella S."/>
            <person name="de Pablos B."/>
            <person name="Perez-Diaz J.-C."/>
            <person name="Purcell R."/>
            <person name="Remmel B."/>
            <person name="Rose M."/>
            <person name="Schlueter T."/>
            <person name="Simoes N."/>
            <person name="Tierrez A."/>
            <person name="Vazquez-Boland J.-A."/>
            <person name="Voss H."/>
            <person name="Wehland J."/>
            <person name="Cossart P."/>
        </authorList>
    </citation>
    <scope>NUCLEOTIDE SEQUENCE [LARGE SCALE GENOMIC DNA]</scope>
    <source>
        <strain>ATCC BAA-680 / CLIP 11262</strain>
    </source>
</reference>
<sequence length="277" mass="30505">MAIKKYKPTTNGRRHMTSSDFAEITTSTPEKSLLRPLKKKAGRNNQGKLTVRHHGGGHKRQYRVIDFKRNKDGIPGRVATIEYDPNRSANIALINYADGEKRYIIAAKGLEVGQTIYSGAEADIKVGNALELKDIPVGTVIHNIEMKPGKGGQLVRSAGTSAQVLGKEGKYVLIRLNSGEVRMILATCRATIGQVGNEQHELINIGKAGRSRWMGKRPTVRGSVMNPNDHPHGGGEGKAPIGRKSPMSPWGKPTLGYKTRKKNNNSDKFIVRRRKKK</sequence>
<name>RL2_LISIN</name>
<feature type="chain" id="PRO_0000129575" description="Large ribosomal subunit protein uL2">
    <location>
        <begin position="1"/>
        <end position="277"/>
    </location>
</feature>
<feature type="region of interest" description="Disordered" evidence="2">
    <location>
        <begin position="24"/>
        <end position="55"/>
    </location>
</feature>
<feature type="region of interest" description="Disordered" evidence="2">
    <location>
        <begin position="221"/>
        <end position="277"/>
    </location>
</feature>
<evidence type="ECO:0000255" key="1">
    <source>
        <dbReference type="HAMAP-Rule" id="MF_01320"/>
    </source>
</evidence>
<evidence type="ECO:0000256" key="2">
    <source>
        <dbReference type="SAM" id="MobiDB-lite"/>
    </source>
</evidence>
<evidence type="ECO:0000305" key="3"/>
<keyword id="KW-0687">Ribonucleoprotein</keyword>
<keyword id="KW-0689">Ribosomal protein</keyword>
<keyword id="KW-0694">RNA-binding</keyword>
<keyword id="KW-0699">rRNA-binding</keyword>
<dbReference type="EMBL" id="AL596173">
    <property type="protein sequence ID" value="CAC98004.1"/>
    <property type="molecule type" value="Genomic_DNA"/>
</dbReference>
<dbReference type="PIR" id="AD1779">
    <property type="entry name" value="AD1779"/>
</dbReference>
<dbReference type="RefSeq" id="WP_003727696.1">
    <property type="nucleotide sequence ID" value="NC_003212.1"/>
</dbReference>
<dbReference type="SMR" id="P60425"/>
<dbReference type="STRING" id="272626.gene:17567165"/>
<dbReference type="GeneID" id="93236051"/>
<dbReference type="KEGG" id="lin:rplB"/>
<dbReference type="eggNOG" id="COG0090">
    <property type="taxonomic scope" value="Bacteria"/>
</dbReference>
<dbReference type="HOGENOM" id="CLU_036235_2_1_9"/>
<dbReference type="OrthoDB" id="9778722at2"/>
<dbReference type="Proteomes" id="UP000002513">
    <property type="component" value="Chromosome"/>
</dbReference>
<dbReference type="GO" id="GO:0015934">
    <property type="term" value="C:large ribosomal subunit"/>
    <property type="evidence" value="ECO:0007669"/>
    <property type="project" value="InterPro"/>
</dbReference>
<dbReference type="GO" id="GO:0019843">
    <property type="term" value="F:rRNA binding"/>
    <property type="evidence" value="ECO:0007669"/>
    <property type="project" value="UniProtKB-UniRule"/>
</dbReference>
<dbReference type="GO" id="GO:0003735">
    <property type="term" value="F:structural constituent of ribosome"/>
    <property type="evidence" value="ECO:0007669"/>
    <property type="project" value="InterPro"/>
</dbReference>
<dbReference type="GO" id="GO:0016740">
    <property type="term" value="F:transferase activity"/>
    <property type="evidence" value="ECO:0007669"/>
    <property type="project" value="InterPro"/>
</dbReference>
<dbReference type="GO" id="GO:0002181">
    <property type="term" value="P:cytoplasmic translation"/>
    <property type="evidence" value="ECO:0007669"/>
    <property type="project" value="TreeGrafter"/>
</dbReference>
<dbReference type="FunFam" id="2.30.30.30:FF:000001">
    <property type="entry name" value="50S ribosomal protein L2"/>
    <property type="match status" value="1"/>
</dbReference>
<dbReference type="FunFam" id="2.40.50.140:FF:000003">
    <property type="entry name" value="50S ribosomal protein L2"/>
    <property type="match status" value="1"/>
</dbReference>
<dbReference type="FunFam" id="4.10.950.10:FF:000001">
    <property type="entry name" value="50S ribosomal protein L2"/>
    <property type="match status" value="1"/>
</dbReference>
<dbReference type="Gene3D" id="2.30.30.30">
    <property type="match status" value="1"/>
</dbReference>
<dbReference type="Gene3D" id="2.40.50.140">
    <property type="entry name" value="Nucleic acid-binding proteins"/>
    <property type="match status" value="1"/>
</dbReference>
<dbReference type="Gene3D" id="4.10.950.10">
    <property type="entry name" value="Ribosomal protein L2, domain 3"/>
    <property type="match status" value="1"/>
</dbReference>
<dbReference type="HAMAP" id="MF_01320_B">
    <property type="entry name" value="Ribosomal_uL2_B"/>
    <property type="match status" value="1"/>
</dbReference>
<dbReference type="InterPro" id="IPR012340">
    <property type="entry name" value="NA-bd_OB-fold"/>
</dbReference>
<dbReference type="InterPro" id="IPR014722">
    <property type="entry name" value="Rib_uL2_dom2"/>
</dbReference>
<dbReference type="InterPro" id="IPR002171">
    <property type="entry name" value="Ribosomal_uL2"/>
</dbReference>
<dbReference type="InterPro" id="IPR005880">
    <property type="entry name" value="Ribosomal_uL2_bac/org-type"/>
</dbReference>
<dbReference type="InterPro" id="IPR022669">
    <property type="entry name" value="Ribosomal_uL2_C"/>
</dbReference>
<dbReference type="InterPro" id="IPR022671">
    <property type="entry name" value="Ribosomal_uL2_CS"/>
</dbReference>
<dbReference type="InterPro" id="IPR014726">
    <property type="entry name" value="Ribosomal_uL2_dom3"/>
</dbReference>
<dbReference type="InterPro" id="IPR022666">
    <property type="entry name" value="Ribosomal_uL2_RNA-bd_dom"/>
</dbReference>
<dbReference type="InterPro" id="IPR008991">
    <property type="entry name" value="Translation_prot_SH3-like_sf"/>
</dbReference>
<dbReference type="NCBIfam" id="TIGR01171">
    <property type="entry name" value="rplB_bact"/>
    <property type="match status" value="1"/>
</dbReference>
<dbReference type="PANTHER" id="PTHR13691:SF5">
    <property type="entry name" value="LARGE RIBOSOMAL SUBUNIT PROTEIN UL2M"/>
    <property type="match status" value="1"/>
</dbReference>
<dbReference type="PANTHER" id="PTHR13691">
    <property type="entry name" value="RIBOSOMAL PROTEIN L2"/>
    <property type="match status" value="1"/>
</dbReference>
<dbReference type="Pfam" id="PF00181">
    <property type="entry name" value="Ribosomal_L2"/>
    <property type="match status" value="1"/>
</dbReference>
<dbReference type="Pfam" id="PF03947">
    <property type="entry name" value="Ribosomal_L2_C"/>
    <property type="match status" value="1"/>
</dbReference>
<dbReference type="PIRSF" id="PIRSF002158">
    <property type="entry name" value="Ribosomal_L2"/>
    <property type="match status" value="1"/>
</dbReference>
<dbReference type="SMART" id="SM01383">
    <property type="entry name" value="Ribosomal_L2"/>
    <property type="match status" value="1"/>
</dbReference>
<dbReference type="SMART" id="SM01382">
    <property type="entry name" value="Ribosomal_L2_C"/>
    <property type="match status" value="1"/>
</dbReference>
<dbReference type="SUPFAM" id="SSF50249">
    <property type="entry name" value="Nucleic acid-binding proteins"/>
    <property type="match status" value="1"/>
</dbReference>
<dbReference type="SUPFAM" id="SSF50104">
    <property type="entry name" value="Translation proteins SH3-like domain"/>
    <property type="match status" value="1"/>
</dbReference>
<dbReference type="PROSITE" id="PS00467">
    <property type="entry name" value="RIBOSOMAL_L2"/>
    <property type="match status" value="1"/>
</dbReference>
<accession>P60425</accession>
<accession>Q927L0</accession>
<comment type="function">
    <text evidence="1">One of the primary rRNA binding proteins. Required for association of the 30S and 50S subunits to form the 70S ribosome, for tRNA binding and peptide bond formation. It has been suggested to have peptidyltransferase activity; this is somewhat controversial. Makes several contacts with the 16S rRNA in the 70S ribosome.</text>
</comment>
<comment type="subunit">
    <text evidence="1">Part of the 50S ribosomal subunit. Forms a bridge to the 30S subunit in the 70S ribosome.</text>
</comment>
<comment type="similarity">
    <text evidence="1">Belongs to the universal ribosomal protein uL2 family.</text>
</comment>